<dbReference type="EMBL" id="AP006878">
    <property type="protein sequence ID" value="BAD85731.1"/>
    <property type="molecule type" value="Genomic_DNA"/>
</dbReference>
<dbReference type="RefSeq" id="WP_011250493.1">
    <property type="nucleotide sequence ID" value="NC_006624.1"/>
</dbReference>
<dbReference type="PDB" id="6SKF">
    <property type="method" value="EM"/>
    <property type="resolution" value="2.95 A"/>
    <property type="chains" value="BD=1-346"/>
</dbReference>
<dbReference type="PDB" id="6SKG">
    <property type="method" value="EM"/>
    <property type="resolution" value="2.65 A"/>
    <property type="chains" value="BD=1-346"/>
</dbReference>
<dbReference type="PDB" id="6TH6">
    <property type="method" value="EM"/>
    <property type="resolution" value="2.55 A"/>
    <property type="chains" value="BD=1-346"/>
</dbReference>
<dbReference type="PDBsum" id="6SKF"/>
<dbReference type="PDBsum" id="6SKG"/>
<dbReference type="PDBsum" id="6TH6"/>
<dbReference type="EMDB" id="EMD-10223"/>
<dbReference type="EMDB" id="EMD-10224"/>
<dbReference type="EMDB" id="EMD-10503"/>
<dbReference type="SMR" id="Q5JDJ0"/>
<dbReference type="FunCoup" id="Q5JDJ0">
    <property type="interactions" value="129"/>
</dbReference>
<dbReference type="STRING" id="69014.TK1542"/>
<dbReference type="EnsemblBacteria" id="BAD85731">
    <property type="protein sequence ID" value="BAD85731"/>
    <property type="gene ID" value="TK1542"/>
</dbReference>
<dbReference type="GeneID" id="78448070"/>
<dbReference type="KEGG" id="tko:TK1542"/>
<dbReference type="PATRIC" id="fig|69014.16.peg.1502"/>
<dbReference type="eggNOG" id="arCOG04070">
    <property type="taxonomic scope" value="Archaea"/>
</dbReference>
<dbReference type="HOGENOM" id="CLU_033361_2_0_2"/>
<dbReference type="InParanoid" id="Q5JDJ0"/>
<dbReference type="OrthoDB" id="6121at2157"/>
<dbReference type="PhylomeDB" id="Q5JDJ0"/>
<dbReference type="Proteomes" id="UP000000536">
    <property type="component" value="Chromosome"/>
</dbReference>
<dbReference type="GO" id="GO:0022625">
    <property type="term" value="C:cytosolic large ribosomal subunit"/>
    <property type="evidence" value="ECO:0000318"/>
    <property type="project" value="GO_Central"/>
</dbReference>
<dbReference type="GO" id="GO:0003723">
    <property type="term" value="F:RNA binding"/>
    <property type="evidence" value="ECO:0000318"/>
    <property type="project" value="GO_Central"/>
</dbReference>
<dbReference type="GO" id="GO:0019843">
    <property type="term" value="F:rRNA binding"/>
    <property type="evidence" value="ECO:0007669"/>
    <property type="project" value="UniProtKB-UniRule"/>
</dbReference>
<dbReference type="GO" id="GO:0003735">
    <property type="term" value="F:structural constituent of ribosome"/>
    <property type="evidence" value="ECO:0000318"/>
    <property type="project" value="GO_Central"/>
</dbReference>
<dbReference type="GO" id="GO:0006412">
    <property type="term" value="P:translation"/>
    <property type="evidence" value="ECO:0000318"/>
    <property type="project" value="GO_Central"/>
</dbReference>
<dbReference type="FunFam" id="3.30.1430.10:FF:000005">
    <property type="entry name" value="50S ribosomal protein L3"/>
    <property type="match status" value="1"/>
</dbReference>
<dbReference type="Gene3D" id="3.30.1430.10">
    <property type="match status" value="1"/>
</dbReference>
<dbReference type="Gene3D" id="4.10.960.10">
    <property type="entry name" value="Ribosomal protein L3, domain 3"/>
    <property type="match status" value="1"/>
</dbReference>
<dbReference type="Gene3D" id="2.40.30.10">
    <property type="entry name" value="Translation factors"/>
    <property type="match status" value="1"/>
</dbReference>
<dbReference type="HAMAP" id="MF_01325_A">
    <property type="entry name" value="Ribosomal_uL3_A"/>
    <property type="match status" value="1"/>
</dbReference>
<dbReference type="InterPro" id="IPR045077">
    <property type="entry name" value="L3_arc_euk"/>
</dbReference>
<dbReference type="InterPro" id="IPR044892">
    <property type="entry name" value="Ribosomal_L3_dom_3_arc_sf"/>
</dbReference>
<dbReference type="InterPro" id="IPR000597">
    <property type="entry name" value="Ribosomal_uL3"/>
</dbReference>
<dbReference type="InterPro" id="IPR019928">
    <property type="entry name" value="Ribosomal_uL3_arc"/>
</dbReference>
<dbReference type="InterPro" id="IPR019926">
    <property type="entry name" value="Ribosomal_uL3_CS"/>
</dbReference>
<dbReference type="InterPro" id="IPR009000">
    <property type="entry name" value="Transl_B-barrel_sf"/>
</dbReference>
<dbReference type="NCBIfam" id="TIGR03626">
    <property type="entry name" value="L3_arch"/>
    <property type="match status" value="1"/>
</dbReference>
<dbReference type="NCBIfam" id="NF003261">
    <property type="entry name" value="PRK04231.1"/>
    <property type="match status" value="1"/>
</dbReference>
<dbReference type="PANTHER" id="PTHR11363">
    <property type="entry name" value="60S RIBOSOMAL PROTEIN L3-RELATED"/>
    <property type="match status" value="1"/>
</dbReference>
<dbReference type="PANTHER" id="PTHR11363:SF5">
    <property type="entry name" value="LARGE RIBOSOMAL SUBUNIT PROTEIN UL3"/>
    <property type="match status" value="1"/>
</dbReference>
<dbReference type="Pfam" id="PF00297">
    <property type="entry name" value="Ribosomal_L3"/>
    <property type="match status" value="1"/>
</dbReference>
<dbReference type="SUPFAM" id="SSF50447">
    <property type="entry name" value="Translation proteins"/>
    <property type="match status" value="1"/>
</dbReference>
<dbReference type="PROSITE" id="PS00474">
    <property type="entry name" value="RIBOSOMAL_L3"/>
    <property type="match status" value="1"/>
</dbReference>
<keyword id="KW-0002">3D-structure</keyword>
<keyword id="KW-1185">Reference proteome</keyword>
<keyword id="KW-0687">Ribonucleoprotein</keyword>
<keyword id="KW-0689">Ribosomal protein</keyword>
<keyword id="KW-0694">RNA-binding</keyword>
<keyword id="KW-0699">rRNA-binding</keyword>
<reference key="1">
    <citation type="journal article" date="2005" name="Genome Res.">
        <title>Complete genome sequence of the hyperthermophilic archaeon Thermococcus kodakaraensis KOD1 and comparison with Pyrococcus genomes.</title>
        <authorList>
            <person name="Fukui T."/>
            <person name="Atomi H."/>
            <person name="Kanai T."/>
            <person name="Matsumi R."/>
            <person name="Fujiwara S."/>
            <person name="Imanaka T."/>
        </authorList>
    </citation>
    <scope>NUCLEOTIDE SEQUENCE [LARGE SCALE GENOMIC DNA]</scope>
    <source>
        <strain>ATCC BAA-918 / JCM 12380 / KOD1</strain>
    </source>
</reference>
<reference evidence="5 6 7" key="2">
    <citation type="journal article" date="2020" name="Nature">
        <title>Dynamic RNA acetylation revealed by quantitative cross-evolutionary mapping.</title>
        <authorList>
            <person name="Sas-Chen A."/>
            <person name="Thomas J.M."/>
            <person name="Matzov D."/>
            <person name="Taoka M."/>
            <person name="Nance K.D."/>
            <person name="Nir R."/>
            <person name="Bryson K.M."/>
            <person name="Shachar R."/>
            <person name="Liman G.L.S."/>
            <person name="Burkhart B.W."/>
            <person name="Gamage S.T."/>
            <person name="Nobe Y."/>
            <person name="Briney C.A."/>
            <person name="Levy M.J."/>
            <person name="Fuchs R.T."/>
            <person name="Robb G.B."/>
            <person name="Hartmann J."/>
            <person name="Sharma S."/>
            <person name="Lin Q."/>
            <person name="Florens L."/>
            <person name="Washburn M.P."/>
            <person name="Isobe T."/>
            <person name="Santangelo T.J."/>
            <person name="Shalev-Benami M."/>
            <person name="Meier J.L."/>
            <person name="Schwartz S."/>
        </authorList>
    </citation>
    <scope>STRUCTURE BY ELECTRON MICROSCOPY (2.55 ANGSTROMS) IN 70S RIBOSOME</scope>
    <scope>SUBUNIT</scope>
    <source>
        <strain>ATCC BAA-918 / TS559</strain>
    </source>
</reference>
<comment type="function">
    <text evidence="1">One of the primary rRNA binding proteins, it binds directly near the 3'-end of the 23S rRNA, where it nucleates assembly of the 50S subunit.</text>
</comment>
<comment type="subunit">
    <text evidence="1 3">Part of the 50S ribosomal subunit (PubMed:32555463). Forms a cluster with proteins L14 and L24e.</text>
</comment>
<comment type="similarity">
    <text evidence="1">Belongs to the universal ribosomal protein uL3 family.</text>
</comment>
<organism>
    <name type="scientific">Thermococcus kodakarensis (strain ATCC BAA-918 / JCM 12380 / KOD1)</name>
    <name type="common">Pyrococcus kodakaraensis (strain KOD1)</name>
    <dbReference type="NCBI Taxonomy" id="69014"/>
    <lineage>
        <taxon>Archaea</taxon>
        <taxon>Methanobacteriati</taxon>
        <taxon>Methanobacteriota</taxon>
        <taxon>Thermococci</taxon>
        <taxon>Thermococcales</taxon>
        <taxon>Thermococcaceae</taxon>
        <taxon>Thermococcus</taxon>
    </lineage>
</organism>
<name>RL3_THEKO</name>
<accession>Q5JDJ0</accession>
<gene>
    <name evidence="1" type="primary">rpl3</name>
    <name type="ordered locus">TK1542</name>
</gene>
<feature type="chain" id="PRO_0000077220" description="Large ribosomal subunit protein uL3">
    <location>
        <begin position="1"/>
        <end position="346"/>
    </location>
</feature>
<feature type="region of interest" description="Disordered" evidence="2">
    <location>
        <begin position="324"/>
        <end position="346"/>
    </location>
</feature>
<evidence type="ECO:0000255" key="1">
    <source>
        <dbReference type="HAMAP-Rule" id="MF_01325"/>
    </source>
</evidence>
<evidence type="ECO:0000256" key="2">
    <source>
        <dbReference type="SAM" id="MobiDB-lite"/>
    </source>
</evidence>
<evidence type="ECO:0000269" key="3">
    <source>
    </source>
</evidence>
<evidence type="ECO:0000305" key="4"/>
<evidence type="ECO:0007744" key="5">
    <source>
        <dbReference type="PDB" id="6SKF"/>
    </source>
</evidence>
<evidence type="ECO:0007744" key="6">
    <source>
        <dbReference type="PDB" id="6SKG"/>
    </source>
</evidence>
<evidence type="ECO:0007744" key="7">
    <source>
        <dbReference type="PDB" id="6TH6"/>
    </source>
</evidence>
<protein>
    <recommendedName>
        <fullName evidence="1">Large ribosomal subunit protein uL3</fullName>
    </recommendedName>
    <alternativeName>
        <fullName evidence="4">50S ribosomal protein L3</fullName>
    </alternativeName>
</protein>
<sequence>MGKIHRPRRGSLAYSPRKRAKSIVPRIRSWPKDSEVRMLGFAGYKAGMTHILMIDDSPGLTKGKEIFVPVTIVEVPPLFVYGIRAYKQGYLGLETATEVWFHDLHKNVARRIKTLPKNYNEEAFQAKLGQLEDLVNDGEIADVRLLVHTQPWLIGLKKKPEVMEYAIGGDDVKAKFDYAKEKIGKELRAGEVLHEGELLDVIAVTKGKGTQGPVKRWGVKVQFHKAQRAGKGRHIGNLGPWHPARVMWTVPQAGQMGFHHRTEFNKRLIAIGENGKLVLDGNEIEITPKGGFPHYGIVRSDFLMIEGTIPGSFKRIIRVRPAIRPPKKKPPVERPQITYVSRESKQ</sequence>
<proteinExistence type="evidence at protein level"/>